<protein>
    <recommendedName>
        <fullName evidence="2">Bioactive peptide 3</fullName>
        <shortName evidence="2">BAP3</shortName>
    </recommendedName>
</protein>
<name>BAP3_LATCU</name>
<keyword id="KW-0044">Antibiotic</keyword>
<keyword id="KW-0929">Antimicrobial</keyword>
<keyword id="KW-0078">Bacteriocin</keyword>
<keyword id="KW-0903">Direct protein sequencing</keyword>
<keyword id="KW-1015">Disulfide bond</keyword>
<keyword id="KW-0964">Secreted</keyword>
<reference evidence="3" key="1">
    <citation type="journal article" date="2010" name="Food Res. Intern.">
        <title>Production of three anti-listerial peptides by Lactobacillus curvatus in MRS broth.</title>
        <authorList>
            <person name="Ghalfi H."/>
            <person name="Benkerroum N."/>
            <person name="Ongena M."/>
            <person name="Bensaid M."/>
            <person name="Thonart P."/>
        </authorList>
    </citation>
    <scope>PROTEIN SEQUENCE</scope>
    <scope>FUNCTION</scope>
    <scope>SUBCELLULAR LOCATION</scope>
    <scope>DISULFIDE BOND</scope>
    <source>
        <strain evidence="1">CWBI-B28</strain>
    </source>
</reference>
<dbReference type="GO" id="GO:0005576">
    <property type="term" value="C:extracellular region"/>
    <property type="evidence" value="ECO:0007669"/>
    <property type="project" value="UniProtKB-SubCell"/>
</dbReference>
<dbReference type="GO" id="GO:0042742">
    <property type="term" value="P:defense response to bacterium"/>
    <property type="evidence" value="ECO:0007669"/>
    <property type="project" value="UniProtKB-KW"/>
</dbReference>
<dbReference type="GO" id="GO:0031640">
    <property type="term" value="P:killing of cells of another organism"/>
    <property type="evidence" value="ECO:0007669"/>
    <property type="project" value="UniProtKB-KW"/>
</dbReference>
<sequence>NIPQLTPTP</sequence>
<accession>P84711</accession>
<comment type="function">
    <text evidence="1">Has antibacterial activity against the Gram-positive bacteria L.monocytogenes, L.lactis subsp lactis and L.curvatus H28, but not against the Gram-positive bacteria L.curvatus CWBI-B28, L.brevis and L.plantarum or the Gram-negative bacteria E.coli and Pseudomonas sp 55. Has no antifungal activity against S.cerevisiae, Penicillium sp BKS-TAN2 or A.niger.</text>
</comment>
<comment type="subcellular location">
    <subcellularLocation>
        <location evidence="1">Secreted</location>
    </subcellularLocation>
</comment>
<comment type="PTM">
    <text evidence="1">Contains one disulfide bond.</text>
</comment>
<feature type="peptide" id="PRO_0000223897" description="Bioactive peptide 3" evidence="1">
    <location>
        <begin position="1"/>
        <end position="9" status="greater than"/>
    </location>
</feature>
<feature type="non-terminal residue" evidence="2">
    <location>
        <position position="9"/>
    </location>
</feature>
<proteinExistence type="evidence at protein level"/>
<evidence type="ECO:0000269" key="1">
    <source ref="1"/>
</evidence>
<evidence type="ECO:0000303" key="2">
    <source ref="1"/>
</evidence>
<evidence type="ECO:0000305" key="3"/>
<organism>
    <name type="scientific">Latilactobacillus curvatus</name>
    <name type="common">Lactobacillus curvatus</name>
    <dbReference type="NCBI Taxonomy" id="28038"/>
    <lineage>
        <taxon>Bacteria</taxon>
        <taxon>Bacillati</taxon>
        <taxon>Bacillota</taxon>
        <taxon>Bacilli</taxon>
        <taxon>Lactobacillales</taxon>
        <taxon>Lactobacillaceae</taxon>
        <taxon>Latilactobacillus</taxon>
    </lineage>
</organism>